<protein>
    <recommendedName>
        <fullName evidence="1">Glutathione-regulated potassium-efflux system ancillary protein KefG</fullName>
    </recommendedName>
    <alternativeName>
        <fullName evidence="1">Putative quinone oxidoreductase KefG</fullName>
        <ecNumber evidence="1">1.6.5.2</ecNumber>
    </alternativeName>
</protein>
<feature type="chain" id="PRO_1000145576" description="Glutathione-regulated potassium-efflux system ancillary protein KefG">
    <location>
        <begin position="1"/>
        <end position="184"/>
    </location>
</feature>
<dbReference type="EC" id="1.6.5.2" evidence="1"/>
<dbReference type="EMBL" id="CU928163">
    <property type="protein sequence ID" value="CAR14960.1"/>
    <property type="molecule type" value="Genomic_DNA"/>
</dbReference>
<dbReference type="RefSeq" id="YP_002414465.1">
    <property type="nucleotide sequence ID" value="NC_011751.1"/>
</dbReference>
<dbReference type="SMR" id="B7NDW0"/>
<dbReference type="STRING" id="585056.ECUMN_3812"/>
<dbReference type="KEGG" id="eum:ECUMN_3812"/>
<dbReference type="PATRIC" id="fig|585056.7.peg.3986"/>
<dbReference type="HOGENOM" id="CLU_058643_0_1_6"/>
<dbReference type="Proteomes" id="UP000007097">
    <property type="component" value="Chromosome"/>
</dbReference>
<dbReference type="GO" id="GO:0005886">
    <property type="term" value="C:plasma membrane"/>
    <property type="evidence" value="ECO:0007669"/>
    <property type="project" value="UniProtKB-SubCell"/>
</dbReference>
<dbReference type="GO" id="GO:0009055">
    <property type="term" value="F:electron transfer activity"/>
    <property type="evidence" value="ECO:0007669"/>
    <property type="project" value="TreeGrafter"/>
</dbReference>
<dbReference type="GO" id="GO:0010181">
    <property type="term" value="F:FMN binding"/>
    <property type="evidence" value="ECO:0007669"/>
    <property type="project" value="TreeGrafter"/>
</dbReference>
<dbReference type="GO" id="GO:0050136">
    <property type="term" value="F:NADH:ubiquinone reductase (non-electrogenic) activity"/>
    <property type="evidence" value="ECO:0007669"/>
    <property type="project" value="RHEA"/>
</dbReference>
<dbReference type="GO" id="GO:0008753">
    <property type="term" value="F:NADPH dehydrogenase (quinone) activity"/>
    <property type="evidence" value="ECO:0007669"/>
    <property type="project" value="RHEA"/>
</dbReference>
<dbReference type="GO" id="GO:1901381">
    <property type="term" value="P:positive regulation of potassium ion transmembrane transport"/>
    <property type="evidence" value="ECO:0007669"/>
    <property type="project" value="UniProtKB-UniRule"/>
</dbReference>
<dbReference type="GO" id="GO:0006813">
    <property type="term" value="P:potassium ion transport"/>
    <property type="evidence" value="ECO:0007669"/>
    <property type="project" value="InterPro"/>
</dbReference>
<dbReference type="FunFam" id="3.40.50.360:FF:000013">
    <property type="entry name" value="Glutathione-regulated potassium-efflux system ancillary protein KefG"/>
    <property type="match status" value="1"/>
</dbReference>
<dbReference type="Gene3D" id="3.40.50.360">
    <property type="match status" value="1"/>
</dbReference>
<dbReference type="HAMAP" id="MF_01415">
    <property type="entry name" value="K_H_efflux_KefG"/>
    <property type="match status" value="1"/>
</dbReference>
<dbReference type="InterPro" id="IPR003680">
    <property type="entry name" value="Flavodoxin_fold"/>
</dbReference>
<dbReference type="InterPro" id="IPR029039">
    <property type="entry name" value="Flavoprotein-like_sf"/>
</dbReference>
<dbReference type="InterPro" id="IPR023947">
    <property type="entry name" value="K_H_efflux_KefG"/>
</dbReference>
<dbReference type="InterPro" id="IPR046980">
    <property type="entry name" value="KefG/KefF"/>
</dbReference>
<dbReference type="NCBIfam" id="NF003430">
    <property type="entry name" value="PRK04930.1"/>
    <property type="match status" value="1"/>
</dbReference>
<dbReference type="PANTHER" id="PTHR47307">
    <property type="entry name" value="GLUTATHIONE-REGULATED POTASSIUM-EFFLUX SYSTEM ANCILLARY PROTEIN KEFG"/>
    <property type="match status" value="1"/>
</dbReference>
<dbReference type="PANTHER" id="PTHR47307:SF1">
    <property type="entry name" value="GLUTATHIONE-REGULATED POTASSIUM-EFFLUX SYSTEM ANCILLARY PROTEIN KEFG"/>
    <property type="match status" value="1"/>
</dbReference>
<dbReference type="Pfam" id="PF02525">
    <property type="entry name" value="Flavodoxin_2"/>
    <property type="match status" value="1"/>
</dbReference>
<dbReference type="SUPFAM" id="SSF52218">
    <property type="entry name" value="Flavoproteins"/>
    <property type="match status" value="1"/>
</dbReference>
<proteinExistence type="inferred from homology"/>
<keyword id="KW-0997">Cell inner membrane</keyword>
<keyword id="KW-1003">Cell membrane</keyword>
<keyword id="KW-0472">Membrane</keyword>
<keyword id="KW-0520">NAD</keyword>
<keyword id="KW-0560">Oxidoreductase</keyword>
<gene>
    <name evidence="1" type="primary">kefG</name>
    <name type="ordered locus">ECUMN_3812</name>
</gene>
<reference key="1">
    <citation type="journal article" date="2009" name="PLoS Genet.">
        <title>Organised genome dynamics in the Escherichia coli species results in highly diverse adaptive paths.</title>
        <authorList>
            <person name="Touchon M."/>
            <person name="Hoede C."/>
            <person name="Tenaillon O."/>
            <person name="Barbe V."/>
            <person name="Baeriswyl S."/>
            <person name="Bidet P."/>
            <person name="Bingen E."/>
            <person name="Bonacorsi S."/>
            <person name="Bouchier C."/>
            <person name="Bouvet O."/>
            <person name="Calteau A."/>
            <person name="Chiapello H."/>
            <person name="Clermont O."/>
            <person name="Cruveiller S."/>
            <person name="Danchin A."/>
            <person name="Diard M."/>
            <person name="Dossat C."/>
            <person name="Karoui M.E."/>
            <person name="Frapy E."/>
            <person name="Garry L."/>
            <person name="Ghigo J.M."/>
            <person name="Gilles A.M."/>
            <person name="Johnson J."/>
            <person name="Le Bouguenec C."/>
            <person name="Lescat M."/>
            <person name="Mangenot S."/>
            <person name="Martinez-Jehanne V."/>
            <person name="Matic I."/>
            <person name="Nassif X."/>
            <person name="Oztas S."/>
            <person name="Petit M.A."/>
            <person name="Pichon C."/>
            <person name="Rouy Z."/>
            <person name="Ruf C.S."/>
            <person name="Schneider D."/>
            <person name="Tourret J."/>
            <person name="Vacherie B."/>
            <person name="Vallenet D."/>
            <person name="Medigue C."/>
            <person name="Rocha E.P.C."/>
            <person name="Denamur E."/>
        </authorList>
    </citation>
    <scope>NUCLEOTIDE SEQUENCE [LARGE SCALE GENOMIC DNA]</scope>
    <source>
        <strain>UMN026 / ExPEC</strain>
    </source>
</reference>
<comment type="function">
    <text evidence="1">Regulatory subunit of a potassium efflux system that confers protection against electrophiles. Required for full activity of KefB.</text>
</comment>
<comment type="catalytic activity">
    <reaction evidence="1">
        <text>a quinone + NADH + H(+) = a quinol + NAD(+)</text>
        <dbReference type="Rhea" id="RHEA:46160"/>
        <dbReference type="ChEBI" id="CHEBI:15378"/>
        <dbReference type="ChEBI" id="CHEBI:24646"/>
        <dbReference type="ChEBI" id="CHEBI:57540"/>
        <dbReference type="ChEBI" id="CHEBI:57945"/>
        <dbReference type="ChEBI" id="CHEBI:132124"/>
        <dbReference type="EC" id="1.6.5.2"/>
    </reaction>
</comment>
<comment type="catalytic activity">
    <reaction evidence="1">
        <text>a quinone + NADPH + H(+) = a quinol + NADP(+)</text>
        <dbReference type="Rhea" id="RHEA:46164"/>
        <dbReference type="ChEBI" id="CHEBI:15378"/>
        <dbReference type="ChEBI" id="CHEBI:24646"/>
        <dbReference type="ChEBI" id="CHEBI:57783"/>
        <dbReference type="ChEBI" id="CHEBI:58349"/>
        <dbReference type="ChEBI" id="CHEBI:132124"/>
        <dbReference type="EC" id="1.6.5.2"/>
    </reaction>
</comment>
<comment type="subunit">
    <text evidence="1">Interacts with KefB.</text>
</comment>
<comment type="subcellular location">
    <subcellularLocation>
        <location evidence="1">Cell inner membrane</location>
        <topology evidence="1">Peripheral membrane protein</topology>
        <orientation evidence="1">Cytoplasmic side</orientation>
    </subcellularLocation>
</comment>
<comment type="similarity">
    <text evidence="1">Belongs to the NAD(P)H dehydrogenase (quinone) family. KefG subfamily.</text>
</comment>
<sequence length="184" mass="20958">MMSQPAKVLLLYAHPESQDSVANRVLLKPATQLSNVTVHDLYAHYPDFFIDIPREQALLREHEVIVFQHPLYTYSCPALLKEWLDRVLSRGFASGPGGNQLAGKYWRSVITTGEPESAYRYDALNRYPMSDVLRPFELAAGMCRMHWLSPIIIYWARRQSAQELASHARAYGDWLANPLSPGGR</sequence>
<accession>B7NDW0</accession>
<organism>
    <name type="scientific">Escherichia coli O17:K52:H18 (strain UMN026 / ExPEC)</name>
    <dbReference type="NCBI Taxonomy" id="585056"/>
    <lineage>
        <taxon>Bacteria</taxon>
        <taxon>Pseudomonadati</taxon>
        <taxon>Pseudomonadota</taxon>
        <taxon>Gammaproteobacteria</taxon>
        <taxon>Enterobacterales</taxon>
        <taxon>Enterobacteriaceae</taxon>
        <taxon>Escherichia</taxon>
    </lineage>
</organism>
<name>KEFG_ECOLU</name>
<evidence type="ECO:0000255" key="1">
    <source>
        <dbReference type="HAMAP-Rule" id="MF_01415"/>
    </source>
</evidence>